<accession>Q87MG2</accession>
<protein>
    <recommendedName>
        <fullName evidence="1">Ribonuclease HI</fullName>
        <shortName evidence="1">RNase HI</shortName>
        <ecNumber evidence="1">3.1.26.4</ecNumber>
    </recommendedName>
</protein>
<proteinExistence type="inferred from homology"/>
<feature type="chain" id="PRO_0000195417" description="Ribonuclease HI">
    <location>
        <begin position="1"/>
        <end position="154"/>
    </location>
</feature>
<feature type="domain" description="RNase H type-1" evidence="2">
    <location>
        <begin position="1"/>
        <end position="142"/>
    </location>
</feature>
<feature type="binding site" evidence="1">
    <location>
        <position position="10"/>
    </location>
    <ligand>
        <name>Mg(2+)</name>
        <dbReference type="ChEBI" id="CHEBI:18420"/>
        <label>1</label>
    </ligand>
</feature>
<feature type="binding site" evidence="1">
    <location>
        <position position="10"/>
    </location>
    <ligand>
        <name>Mg(2+)</name>
        <dbReference type="ChEBI" id="CHEBI:18420"/>
        <label>2</label>
    </ligand>
</feature>
<feature type="binding site" evidence="1">
    <location>
        <position position="48"/>
    </location>
    <ligand>
        <name>Mg(2+)</name>
        <dbReference type="ChEBI" id="CHEBI:18420"/>
        <label>1</label>
    </ligand>
</feature>
<feature type="binding site" evidence="1">
    <location>
        <position position="70"/>
    </location>
    <ligand>
        <name>Mg(2+)</name>
        <dbReference type="ChEBI" id="CHEBI:18420"/>
        <label>1</label>
    </ligand>
</feature>
<feature type="binding site" evidence="1">
    <location>
        <position position="134"/>
    </location>
    <ligand>
        <name>Mg(2+)</name>
        <dbReference type="ChEBI" id="CHEBI:18420"/>
        <label>2</label>
    </ligand>
</feature>
<gene>
    <name evidence="1" type="primary">rnhA</name>
    <name type="ordered locus">VP2293</name>
</gene>
<evidence type="ECO:0000255" key="1">
    <source>
        <dbReference type="HAMAP-Rule" id="MF_00042"/>
    </source>
</evidence>
<evidence type="ECO:0000255" key="2">
    <source>
        <dbReference type="PROSITE-ProRule" id="PRU00408"/>
    </source>
</evidence>
<reference key="1">
    <citation type="journal article" date="2003" name="Lancet">
        <title>Genome sequence of Vibrio parahaemolyticus: a pathogenic mechanism distinct from that of V. cholerae.</title>
        <authorList>
            <person name="Makino K."/>
            <person name="Oshima K."/>
            <person name="Kurokawa K."/>
            <person name="Yokoyama K."/>
            <person name="Uda T."/>
            <person name="Tagomori K."/>
            <person name="Iijima Y."/>
            <person name="Najima M."/>
            <person name="Nakano M."/>
            <person name="Yamashita A."/>
            <person name="Kubota Y."/>
            <person name="Kimura S."/>
            <person name="Yasunaga T."/>
            <person name="Honda T."/>
            <person name="Shinagawa H."/>
            <person name="Hattori M."/>
            <person name="Iida T."/>
        </authorList>
    </citation>
    <scope>NUCLEOTIDE SEQUENCE [LARGE SCALE GENOMIC DNA]</scope>
    <source>
        <strain>RIMD 2210633</strain>
    </source>
</reference>
<organism>
    <name type="scientific">Vibrio parahaemolyticus serotype O3:K6 (strain RIMD 2210633)</name>
    <dbReference type="NCBI Taxonomy" id="223926"/>
    <lineage>
        <taxon>Bacteria</taxon>
        <taxon>Pseudomonadati</taxon>
        <taxon>Pseudomonadota</taxon>
        <taxon>Gammaproteobacteria</taxon>
        <taxon>Vibrionales</taxon>
        <taxon>Vibrionaceae</taxon>
        <taxon>Vibrio</taxon>
    </lineage>
</organism>
<sequence length="154" mass="17509">MTKHVEIFTDGSCLGNPGPGGYGIVLRYKDVEKTLSKGYTLTTNNRMEMLAAVVALQTLKEPCRVTLTTDSQYVRQGITQWIHNWKKRGWKTADKKPVKNADLWQALDKETARHQVDWHWVKGHAGHRENEICDELARTAAENPTEEDTGYQPS</sequence>
<dbReference type="EC" id="3.1.26.4" evidence="1"/>
<dbReference type="EMBL" id="BA000031">
    <property type="protein sequence ID" value="BAC60556.1"/>
    <property type="molecule type" value="Genomic_DNA"/>
</dbReference>
<dbReference type="RefSeq" id="NP_798672.1">
    <property type="nucleotide sequence ID" value="NC_004603.1"/>
</dbReference>
<dbReference type="RefSeq" id="WP_005484436.1">
    <property type="nucleotide sequence ID" value="NC_004603.1"/>
</dbReference>
<dbReference type="SMR" id="Q87MG2"/>
<dbReference type="GeneID" id="1189806"/>
<dbReference type="KEGG" id="vpa:VP2293"/>
<dbReference type="PATRIC" id="fig|223926.6.peg.2195"/>
<dbReference type="eggNOG" id="COG0328">
    <property type="taxonomic scope" value="Bacteria"/>
</dbReference>
<dbReference type="HOGENOM" id="CLU_030894_6_0_6"/>
<dbReference type="Proteomes" id="UP000002493">
    <property type="component" value="Chromosome 1"/>
</dbReference>
<dbReference type="GO" id="GO:0005737">
    <property type="term" value="C:cytoplasm"/>
    <property type="evidence" value="ECO:0007669"/>
    <property type="project" value="UniProtKB-SubCell"/>
</dbReference>
<dbReference type="GO" id="GO:0000287">
    <property type="term" value="F:magnesium ion binding"/>
    <property type="evidence" value="ECO:0007669"/>
    <property type="project" value="UniProtKB-UniRule"/>
</dbReference>
<dbReference type="GO" id="GO:0003676">
    <property type="term" value="F:nucleic acid binding"/>
    <property type="evidence" value="ECO:0007669"/>
    <property type="project" value="InterPro"/>
</dbReference>
<dbReference type="GO" id="GO:0004523">
    <property type="term" value="F:RNA-DNA hybrid ribonuclease activity"/>
    <property type="evidence" value="ECO:0007669"/>
    <property type="project" value="UniProtKB-UniRule"/>
</dbReference>
<dbReference type="GO" id="GO:0043137">
    <property type="term" value="P:DNA replication, removal of RNA primer"/>
    <property type="evidence" value="ECO:0007669"/>
    <property type="project" value="TreeGrafter"/>
</dbReference>
<dbReference type="CDD" id="cd09278">
    <property type="entry name" value="RNase_HI_prokaryote_like"/>
    <property type="match status" value="1"/>
</dbReference>
<dbReference type="FunFam" id="3.30.420.10:FF:000008">
    <property type="entry name" value="Ribonuclease H"/>
    <property type="match status" value="1"/>
</dbReference>
<dbReference type="Gene3D" id="3.30.420.10">
    <property type="entry name" value="Ribonuclease H-like superfamily/Ribonuclease H"/>
    <property type="match status" value="1"/>
</dbReference>
<dbReference type="HAMAP" id="MF_00042">
    <property type="entry name" value="RNase_H"/>
    <property type="match status" value="1"/>
</dbReference>
<dbReference type="InterPro" id="IPR050092">
    <property type="entry name" value="RNase_H"/>
</dbReference>
<dbReference type="InterPro" id="IPR012337">
    <property type="entry name" value="RNaseH-like_sf"/>
</dbReference>
<dbReference type="InterPro" id="IPR002156">
    <property type="entry name" value="RNaseH_domain"/>
</dbReference>
<dbReference type="InterPro" id="IPR036397">
    <property type="entry name" value="RNaseH_sf"/>
</dbReference>
<dbReference type="InterPro" id="IPR022892">
    <property type="entry name" value="RNaseHI"/>
</dbReference>
<dbReference type="NCBIfam" id="NF001236">
    <property type="entry name" value="PRK00203.1"/>
    <property type="match status" value="1"/>
</dbReference>
<dbReference type="PANTHER" id="PTHR10642">
    <property type="entry name" value="RIBONUCLEASE H1"/>
    <property type="match status" value="1"/>
</dbReference>
<dbReference type="PANTHER" id="PTHR10642:SF26">
    <property type="entry name" value="RIBONUCLEASE H1"/>
    <property type="match status" value="1"/>
</dbReference>
<dbReference type="Pfam" id="PF00075">
    <property type="entry name" value="RNase_H"/>
    <property type="match status" value="1"/>
</dbReference>
<dbReference type="SUPFAM" id="SSF53098">
    <property type="entry name" value="Ribonuclease H-like"/>
    <property type="match status" value="1"/>
</dbReference>
<dbReference type="PROSITE" id="PS50879">
    <property type="entry name" value="RNASE_H_1"/>
    <property type="match status" value="1"/>
</dbReference>
<keyword id="KW-0963">Cytoplasm</keyword>
<keyword id="KW-0255">Endonuclease</keyword>
<keyword id="KW-0378">Hydrolase</keyword>
<keyword id="KW-0460">Magnesium</keyword>
<keyword id="KW-0479">Metal-binding</keyword>
<keyword id="KW-0540">Nuclease</keyword>
<comment type="function">
    <text evidence="1">Endonuclease that specifically degrades the RNA of RNA-DNA hybrids.</text>
</comment>
<comment type="catalytic activity">
    <reaction evidence="1">
        <text>Endonucleolytic cleavage to 5'-phosphomonoester.</text>
        <dbReference type="EC" id="3.1.26.4"/>
    </reaction>
</comment>
<comment type="cofactor">
    <cofactor evidence="1">
        <name>Mg(2+)</name>
        <dbReference type="ChEBI" id="CHEBI:18420"/>
    </cofactor>
    <text evidence="1">Binds 1 Mg(2+) ion per subunit. May bind a second metal ion at a regulatory site, or after substrate binding.</text>
</comment>
<comment type="subunit">
    <text evidence="1">Monomer.</text>
</comment>
<comment type="subcellular location">
    <subcellularLocation>
        <location evidence="1">Cytoplasm</location>
    </subcellularLocation>
</comment>
<comment type="similarity">
    <text evidence="1">Belongs to the RNase H family.</text>
</comment>
<name>RNH_VIBPA</name>